<feature type="chain" id="PRO_0000336379" description="Thiamine-phosphate synthase">
    <location>
        <begin position="1"/>
        <end position="216"/>
    </location>
</feature>
<feature type="binding site" evidence="1">
    <location>
        <begin position="41"/>
        <end position="45"/>
    </location>
    <ligand>
        <name>4-amino-2-methyl-5-(diphosphooxymethyl)pyrimidine</name>
        <dbReference type="ChEBI" id="CHEBI:57841"/>
    </ligand>
</feature>
<feature type="binding site" evidence="1">
    <location>
        <position position="73"/>
    </location>
    <ligand>
        <name>4-amino-2-methyl-5-(diphosphooxymethyl)pyrimidine</name>
        <dbReference type="ChEBI" id="CHEBI:57841"/>
    </ligand>
</feature>
<feature type="binding site" evidence="1">
    <location>
        <position position="74"/>
    </location>
    <ligand>
        <name>Mg(2+)</name>
        <dbReference type="ChEBI" id="CHEBI:18420"/>
    </ligand>
</feature>
<feature type="binding site" evidence="1">
    <location>
        <position position="93"/>
    </location>
    <ligand>
        <name>Mg(2+)</name>
        <dbReference type="ChEBI" id="CHEBI:18420"/>
    </ligand>
</feature>
<feature type="binding site" evidence="1">
    <location>
        <position position="111"/>
    </location>
    <ligand>
        <name>4-amino-2-methyl-5-(diphosphooxymethyl)pyrimidine</name>
        <dbReference type="ChEBI" id="CHEBI:57841"/>
    </ligand>
</feature>
<feature type="binding site" evidence="1">
    <location>
        <begin position="137"/>
        <end position="139"/>
    </location>
    <ligand>
        <name>2-[(2R,5Z)-2-carboxy-4-methylthiazol-5(2H)-ylidene]ethyl phosphate</name>
        <dbReference type="ChEBI" id="CHEBI:62899"/>
    </ligand>
</feature>
<feature type="binding site" evidence="1">
    <location>
        <position position="140"/>
    </location>
    <ligand>
        <name>4-amino-2-methyl-5-(diphosphooxymethyl)pyrimidine</name>
        <dbReference type="ChEBI" id="CHEBI:57841"/>
    </ligand>
</feature>
<feature type="binding site" evidence="1">
    <location>
        <position position="168"/>
    </location>
    <ligand>
        <name>2-[(2R,5Z)-2-carboxy-4-methylthiazol-5(2H)-ylidene]ethyl phosphate</name>
        <dbReference type="ChEBI" id="CHEBI:62899"/>
    </ligand>
</feature>
<feature type="binding site" evidence="1">
    <location>
        <begin position="188"/>
        <end position="189"/>
    </location>
    <ligand>
        <name>2-[(2R,5Z)-2-carboxy-4-methylthiazol-5(2H)-ylidene]ethyl phosphate</name>
        <dbReference type="ChEBI" id="CHEBI:62899"/>
    </ligand>
</feature>
<organism>
    <name type="scientific">Chloroflexus aurantiacus (strain ATCC 29366 / DSM 635 / J-10-fl)</name>
    <dbReference type="NCBI Taxonomy" id="324602"/>
    <lineage>
        <taxon>Bacteria</taxon>
        <taxon>Bacillati</taxon>
        <taxon>Chloroflexota</taxon>
        <taxon>Chloroflexia</taxon>
        <taxon>Chloroflexales</taxon>
        <taxon>Chloroflexineae</taxon>
        <taxon>Chloroflexaceae</taxon>
        <taxon>Chloroflexus</taxon>
    </lineage>
</organism>
<dbReference type="EC" id="2.5.1.3" evidence="1"/>
<dbReference type="EMBL" id="CP000909">
    <property type="protein sequence ID" value="ABY33624.1"/>
    <property type="molecule type" value="Genomic_DNA"/>
</dbReference>
<dbReference type="RefSeq" id="WP_012256280.1">
    <property type="nucleotide sequence ID" value="NC_010175.1"/>
</dbReference>
<dbReference type="RefSeq" id="YP_001634013.1">
    <property type="nucleotide sequence ID" value="NC_010175.1"/>
</dbReference>
<dbReference type="SMR" id="A9WDL8"/>
<dbReference type="FunCoup" id="A9WDL8">
    <property type="interactions" value="381"/>
</dbReference>
<dbReference type="STRING" id="324602.Caur_0374"/>
<dbReference type="EnsemblBacteria" id="ABY33624">
    <property type="protein sequence ID" value="ABY33624"/>
    <property type="gene ID" value="Caur_0374"/>
</dbReference>
<dbReference type="KEGG" id="cau:Caur_0374"/>
<dbReference type="PATRIC" id="fig|324602.8.peg.426"/>
<dbReference type="eggNOG" id="COG0352">
    <property type="taxonomic scope" value="Bacteria"/>
</dbReference>
<dbReference type="HOGENOM" id="CLU_018272_3_2_0"/>
<dbReference type="InParanoid" id="A9WDL8"/>
<dbReference type="UniPathway" id="UPA00060">
    <property type="reaction ID" value="UER00141"/>
</dbReference>
<dbReference type="Proteomes" id="UP000002008">
    <property type="component" value="Chromosome"/>
</dbReference>
<dbReference type="GO" id="GO:0005737">
    <property type="term" value="C:cytoplasm"/>
    <property type="evidence" value="ECO:0000318"/>
    <property type="project" value="GO_Central"/>
</dbReference>
<dbReference type="GO" id="GO:0000287">
    <property type="term" value="F:magnesium ion binding"/>
    <property type="evidence" value="ECO:0007669"/>
    <property type="project" value="UniProtKB-UniRule"/>
</dbReference>
<dbReference type="GO" id="GO:0004789">
    <property type="term" value="F:thiamine-phosphate diphosphorylase activity"/>
    <property type="evidence" value="ECO:0000318"/>
    <property type="project" value="GO_Central"/>
</dbReference>
<dbReference type="GO" id="GO:0009228">
    <property type="term" value="P:thiamine biosynthetic process"/>
    <property type="evidence" value="ECO:0000318"/>
    <property type="project" value="GO_Central"/>
</dbReference>
<dbReference type="GO" id="GO:0009229">
    <property type="term" value="P:thiamine diphosphate biosynthetic process"/>
    <property type="evidence" value="ECO:0007669"/>
    <property type="project" value="UniProtKB-UniRule"/>
</dbReference>
<dbReference type="CDD" id="cd00564">
    <property type="entry name" value="TMP_TenI"/>
    <property type="match status" value="1"/>
</dbReference>
<dbReference type="FunFam" id="3.20.20.70:FF:000096">
    <property type="entry name" value="Thiamine-phosphate synthase"/>
    <property type="match status" value="1"/>
</dbReference>
<dbReference type="Gene3D" id="3.20.20.70">
    <property type="entry name" value="Aldolase class I"/>
    <property type="match status" value="1"/>
</dbReference>
<dbReference type="HAMAP" id="MF_00097">
    <property type="entry name" value="TMP_synthase"/>
    <property type="match status" value="1"/>
</dbReference>
<dbReference type="InterPro" id="IPR013785">
    <property type="entry name" value="Aldolase_TIM"/>
</dbReference>
<dbReference type="InterPro" id="IPR036206">
    <property type="entry name" value="ThiamineP_synth_sf"/>
</dbReference>
<dbReference type="InterPro" id="IPR022998">
    <property type="entry name" value="ThiamineP_synth_TenI"/>
</dbReference>
<dbReference type="InterPro" id="IPR034291">
    <property type="entry name" value="TMP_synthase"/>
</dbReference>
<dbReference type="NCBIfam" id="TIGR00693">
    <property type="entry name" value="thiE"/>
    <property type="match status" value="1"/>
</dbReference>
<dbReference type="PANTHER" id="PTHR20857">
    <property type="entry name" value="THIAMINE-PHOSPHATE PYROPHOSPHORYLASE"/>
    <property type="match status" value="1"/>
</dbReference>
<dbReference type="PANTHER" id="PTHR20857:SF15">
    <property type="entry name" value="THIAMINE-PHOSPHATE SYNTHASE"/>
    <property type="match status" value="1"/>
</dbReference>
<dbReference type="Pfam" id="PF02581">
    <property type="entry name" value="TMP-TENI"/>
    <property type="match status" value="1"/>
</dbReference>
<dbReference type="SUPFAM" id="SSF51391">
    <property type="entry name" value="Thiamin phosphate synthase"/>
    <property type="match status" value="1"/>
</dbReference>
<protein>
    <recommendedName>
        <fullName evidence="1">Thiamine-phosphate synthase</fullName>
        <shortName evidence="1">TP synthase</shortName>
        <shortName evidence="1">TPS</shortName>
        <ecNumber evidence="1">2.5.1.3</ecNumber>
    </recommendedName>
    <alternativeName>
        <fullName evidence="1">Thiamine-phosphate pyrophosphorylase</fullName>
        <shortName evidence="1">TMP pyrophosphorylase</shortName>
        <shortName evidence="1">TMP-PPase</shortName>
    </alternativeName>
</protein>
<name>THIE_CHLAA</name>
<keyword id="KW-0460">Magnesium</keyword>
<keyword id="KW-0479">Metal-binding</keyword>
<keyword id="KW-1185">Reference proteome</keyword>
<keyword id="KW-0784">Thiamine biosynthesis</keyword>
<keyword id="KW-0808">Transferase</keyword>
<gene>
    <name evidence="1" type="primary">thiE</name>
    <name type="ordered locus">Caur_0374</name>
</gene>
<reference key="1">
    <citation type="journal article" date="2011" name="BMC Genomics">
        <title>Complete genome sequence of the filamentous anoxygenic phototrophic bacterium Chloroflexus aurantiacus.</title>
        <authorList>
            <person name="Tang K.H."/>
            <person name="Barry K."/>
            <person name="Chertkov O."/>
            <person name="Dalin E."/>
            <person name="Han C.S."/>
            <person name="Hauser L.J."/>
            <person name="Honchak B.M."/>
            <person name="Karbach L.E."/>
            <person name="Land M.L."/>
            <person name="Lapidus A."/>
            <person name="Larimer F.W."/>
            <person name="Mikhailova N."/>
            <person name="Pitluck S."/>
            <person name="Pierson B.K."/>
            <person name="Blankenship R.E."/>
        </authorList>
    </citation>
    <scope>NUCLEOTIDE SEQUENCE [LARGE SCALE GENOMIC DNA]</scope>
    <source>
        <strain>ATCC 29366 / DSM 635 / J-10-fl</strain>
    </source>
</reference>
<sequence>MSIAHIVDWRLYVVTDAGLSRGRSHRAVIEAAIVGGATVVQYREKHASTRQMIEEALELRDLTRRAGVPLIVNDRVDVALAVDADGVHVGQDDMPVALARRLIGNKLLGVSAHNLSEALQAVRDGADYLGVGPIFATTTKPDAAAPIGLDGLRAIRQHVSIPIVAIGGINQANAADVMRAGADGIAVVSAVVAADDVTAAARQLRALVSVTQEKAL</sequence>
<comment type="function">
    <text evidence="1">Condenses 4-methyl-5-(beta-hydroxyethyl)thiazole monophosphate (THZ-P) and 2-methyl-4-amino-5-hydroxymethyl pyrimidine pyrophosphate (HMP-PP) to form thiamine monophosphate (TMP).</text>
</comment>
<comment type="catalytic activity">
    <reaction evidence="1">
        <text>2-[(2R,5Z)-2-carboxy-4-methylthiazol-5(2H)-ylidene]ethyl phosphate + 4-amino-2-methyl-5-(diphosphooxymethyl)pyrimidine + 2 H(+) = thiamine phosphate + CO2 + diphosphate</text>
        <dbReference type="Rhea" id="RHEA:47844"/>
        <dbReference type="ChEBI" id="CHEBI:15378"/>
        <dbReference type="ChEBI" id="CHEBI:16526"/>
        <dbReference type="ChEBI" id="CHEBI:33019"/>
        <dbReference type="ChEBI" id="CHEBI:37575"/>
        <dbReference type="ChEBI" id="CHEBI:57841"/>
        <dbReference type="ChEBI" id="CHEBI:62899"/>
        <dbReference type="EC" id="2.5.1.3"/>
    </reaction>
</comment>
<comment type="catalytic activity">
    <reaction evidence="1">
        <text>2-(2-carboxy-4-methylthiazol-5-yl)ethyl phosphate + 4-amino-2-methyl-5-(diphosphooxymethyl)pyrimidine + 2 H(+) = thiamine phosphate + CO2 + diphosphate</text>
        <dbReference type="Rhea" id="RHEA:47848"/>
        <dbReference type="ChEBI" id="CHEBI:15378"/>
        <dbReference type="ChEBI" id="CHEBI:16526"/>
        <dbReference type="ChEBI" id="CHEBI:33019"/>
        <dbReference type="ChEBI" id="CHEBI:37575"/>
        <dbReference type="ChEBI" id="CHEBI:57841"/>
        <dbReference type="ChEBI" id="CHEBI:62890"/>
        <dbReference type="EC" id="2.5.1.3"/>
    </reaction>
</comment>
<comment type="catalytic activity">
    <reaction evidence="1">
        <text>4-methyl-5-(2-phosphooxyethyl)-thiazole + 4-amino-2-methyl-5-(diphosphooxymethyl)pyrimidine + H(+) = thiamine phosphate + diphosphate</text>
        <dbReference type="Rhea" id="RHEA:22328"/>
        <dbReference type="ChEBI" id="CHEBI:15378"/>
        <dbReference type="ChEBI" id="CHEBI:33019"/>
        <dbReference type="ChEBI" id="CHEBI:37575"/>
        <dbReference type="ChEBI" id="CHEBI:57841"/>
        <dbReference type="ChEBI" id="CHEBI:58296"/>
        <dbReference type="EC" id="2.5.1.3"/>
    </reaction>
</comment>
<comment type="cofactor">
    <cofactor evidence="1">
        <name>Mg(2+)</name>
        <dbReference type="ChEBI" id="CHEBI:18420"/>
    </cofactor>
    <text evidence="1">Binds 1 Mg(2+) ion per subunit.</text>
</comment>
<comment type="pathway">
    <text evidence="1">Cofactor biosynthesis; thiamine diphosphate biosynthesis; thiamine phosphate from 4-amino-2-methyl-5-diphosphomethylpyrimidine and 4-methyl-5-(2-phosphoethyl)-thiazole: step 1/1.</text>
</comment>
<comment type="similarity">
    <text evidence="1">Belongs to the thiamine-phosphate synthase family.</text>
</comment>
<proteinExistence type="inferred from homology"/>
<accession>A9WDL8</accession>
<evidence type="ECO:0000255" key="1">
    <source>
        <dbReference type="HAMAP-Rule" id="MF_00097"/>
    </source>
</evidence>